<organism>
    <name type="scientific">Mus musculus</name>
    <name type="common">Mouse</name>
    <dbReference type="NCBI Taxonomy" id="10090"/>
    <lineage>
        <taxon>Eukaryota</taxon>
        <taxon>Metazoa</taxon>
        <taxon>Chordata</taxon>
        <taxon>Craniata</taxon>
        <taxon>Vertebrata</taxon>
        <taxon>Euteleostomi</taxon>
        <taxon>Mammalia</taxon>
        <taxon>Eutheria</taxon>
        <taxon>Euarchontoglires</taxon>
        <taxon>Glires</taxon>
        <taxon>Rodentia</taxon>
        <taxon>Myomorpha</taxon>
        <taxon>Muroidea</taxon>
        <taxon>Muridae</taxon>
        <taxon>Murinae</taxon>
        <taxon>Mus</taxon>
        <taxon>Mus</taxon>
    </lineage>
</organism>
<protein>
    <recommendedName>
        <fullName>Fibroblast growth factor 9</fullName>
        <shortName>FGF-9</shortName>
    </recommendedName>
    <alternativeName>
        <fullName>Glia-activating factor</fullName>
        <shortName>GAF</shortName>
    </alternativeName>
    <alternativeName>
        <fullName>HBGF-9</fullName>
    </alternativeName>
</protein>
<dbReference type="EMBL" id="U33535">
    <property type="protein sequence ID" value="AAC52529.1"/>
    <property type="molecule type" value="mRNA"/>
</dbReference>
<dbReference type="EMBL" id="D38258">
    <property type="protein sequence ID" value="BAA07410.1"/>
    <property type="molecule type" value="mRNA"/>
</dbReference>
<dbReference type="EMBL" id="S82023">
    <property type="protein sequence ID" value="AAB36429.1"/>
    <property type="molecule type" value="mRNA"/>
</dbReference>
<dbReference type="EMBL" id="AF144626">
    <property type="protein sequence ID" value="AAD49222.1"/>
    <property type="molecule type" value="Genomic_DNA"/>
</dbReference>
<dbReference type="EMBL" id="AF144624">
    <property type="protein sequence ID" value="AAD49222.1"/>
    <property type="status" value="JOINED"/>
    <property type="molecule type" value="Genomic_DNA"/>
</dbReference>
<dbReference type="EMBL" id="AF144625">
    <property type="protein sequence ID" value="AAD49222.1"/>
    <property type="status" value="JOINED"/>
    <property type="molecule type" value="Genomic_DNA"/>
</dbReference>
<dbReference type="EMBL" id="AK158782">
    <property type="protein sequence ID" value="BAE34661.1"/>
    <property type="molecule type" value="mRNA"/>
</dbReference>
<dbReference type="EMBL" id="AC125399">
    <property type="status" value="NOT_ANNOTATED_CDS"/>
    <property type="molecule type" value="Genomic_DNA"/>
</dbReference>
<dbReference type="EMBL" id="AC154202">
    <property type="status" value="NOT_ANNOTATED_CDS"/>
    <property type="molecule type" value="Genomic_DNA"/>
</dbReference>
<dbReference type="EMBL" id="CH466535">
    <property type="protein sequence ID" value="EDL36153.1"/>
    <property type="molecule type" value="Genomic_DNA"/>
</dbReference>
<dbReference type="EMBL" id="BC099872">
    <property type="protein sequence ID" value="AAH99872.1"/>
    <property type="molecule type" value="mRNA"/>
</dbReference>
<dbReference type="EMBL" id="BC099873">
    <property type="protein sequence ID" value="AAH99873.1"/>
    <property type="molecule type" value="mRNA"/>
</dbReference>
<dbReference type="EMBL" id="BC099874">
    <property type="protein sequence ID" value="AAH99874.1"/>
    <property type="molecule type" value="mRNA"/>
</dbReference>
<dbReference type="EMBL" id="BC099875">
    <property type="protein sequence ID" value="AAH99875.1"/>
    <property type="molecule type" value="mRNA"/>
</dbReference>
<dbReference type="EMBL" id="BC125237">
    <property type="protein sequence ID" value="AAI25238.1"/>
    <property type="molecule type" value="mRNA"/>
</dbReference>
<dbReference type="CCDS" id="CCDS27164.1"/>
<dbReference type="RefSeq" id="NP_038546.2">
    <property type="nucleotide sequence ID" value="NM_013518.5"/>
</dbReference>
<dbReference type="SMR" id="P54130"/>
<dbReference type="BioGRID" id="199654">
    <property type="interactions" value="1"/>
</dbReference>
<dbReference type="DIP" id="DIP-6032N"/>
<dbReference type="FunCoup" id="P54130">
    <property type="interactions" value="878"/>
</dbReference>
<dbReference type="STRING" id="10090.ENSMUSP00000022545"/>
<dbReference type="GlyCosmos" id="P54130">
    <property type="glycosylation" value="1 site, No reported glycans"/>
</dbReference>
<dbReference type="GlyGen" id="P54130">
    <property type="glycosylation" value="1 site, 1 N-linked glycan (1 site)"/>
</dbReference>
<dbReference type="PhosphoSitePlus" id="P54130"/>
<dbReference type="PaxDb" id="10090-ENSMUSP00000022545"/>
<dbReference type="Antibodypedia" id="3827">
    <property type="antibodies" value="403 antibodies from 35 providers"/>
</dbReference>
<dbReference type="DNASU" id="14180"/>
<dbReference type="Ensembl" id="ENSMUST00000022545.14">
    <property type="protein sequence ID" value="ENSMUSP00000022545.8"/>
    <property type="gene ID" value="ENSMUSG00000021974.16"/>
</dbReference>
<dbReference type="GeneID" id="14180"/>
<dbReference type="KEGG" id="mmu:14180"/>
<dbReference type="UCSC" id="uc007udx.2">
    <property type="organism name" value="mouse"/>
</dbReference>
<dbReference type="AGR" id="MGI:104723"/>
<dbReference type="CTD" id="2254"/>
<dbReference type="MGI" id="MGI:104723">
    <property type="gene designation" value="Fgf9"/>
</dbReference>
<dbReference type="VEuPathDB" id="HostDB:ENSMUSG00000021974"/>
<dbReference type="eggNOG" id="KOG3885">
    <property type="taxonomic scope" value="Eukaryota"/>
</dbReference>
<dbReference type="GeneTree" id="ENSGT00940000160956"/>
<dbReference type="HOGENOM" id="CLU_081609_0_0_1"/>
<dbReference type="InParanoid" id="P54130"/>
<dbReference type="OMA" id="FFWIYLS"/>
<dbReference type="OrthoDB" id="6158176at2759"/>
<dbReference type="PhylomeDB" id="P54130"/>
<dbReference type="TreeFam" id="TF317805"/>
<dbReference type="Reactome" id="R-MMU-109704">
    <property type="pathway name" value="PI3K Cascade"/>
</dbReference>
<dbReference type="Reactome" id="R-MMU-1257604">
    <property type="pathway name" value="PIP3 activates AKT signaling"/>
</dbReference>
<dbReference type="Reactome" id="R-MMU-190322">
    <property type="pathway name" value="FGFR4 ligand binding and activation"/>
</dbReference>
<dbReference type="Reactome" id="R-MMU-190371">
    <property type="pathway name" value="FGFR3b ligand binding and activation"/>
</dbReference>
<dbReference type="Reactome" id="R-MMU-190372">
    <property type="pathway name" value="FGFR3c ligand binding and activation"/>
</dbReference>
<dbReference type="Reactome" id="R-MMU-190373">
    <property type="pathway name" value="FGFR1c ligand binding and activation"/>
</dbReference>
<dbReference type="Reactome" id="R-MMU-190375">
    <property type="pathway name" value="FGFR2c ligand binding and activation"/>
</dbReference>
<dbReference type="Reactome" id="R-MMU-5654219">
    <property type="pathway name" value="Phospholipase C-mediated cascade: FGFR1"/>
</dbReference>
<dbReference type="Reactome" id="R-MMU-5654221">
    <property type="pathway name" value="Phospholipase C-mediated cascade, FGFR2"/>
</dbReference>
<dbReference type="Reactome" id="R-MMU-5654227">
    <property type="pathway name" value="Phospholipase C-mediated cascade, FGFR3"/>
</dbReference>
<dbReference type="Reactome" id="R-MMU-5654228">
    <property type="pathway name" value="Phospholipase C-mediated cascade, FGFR4"/>
</dbReference>
<dbReference type="Reactome" id="R-MMU-5654687">
    <property type="pathway name" value="Downstream signaling of activated FGFR1"/>
</dbReference>
<dbReference type="Reactome" id="R-MMU-5654688">
    <property type="pathway name" value="SHC-mediated cascade:FGFR1"/>
</dbReference>
<dbReference type="Reactome" id="R-MMU-5654689">
    <property type="pathway name" value="PI-3K cascade:FGFR1"/>
</dbReference>
<dbReference type="Reactome" id="R-MMU-5654693">
    <property type="pathway name" value="FRS-mediated FGFR1 signaling"/>
</dbReference>
<dbReference type="Reactome" id="R-MMU-5654695">
    <property type="pathway name" value="PI-3K cascade:FGFR2"/>
</dbReference>
<dbReference type="Reactome" id="R-MMU-5654699">
    <property type="pathway name" value="SHC-mediated cascade:FGFR2"/>
</dbReference>
<dbReference type="Reactome" id="R-MMU-5654700">
    <property type="pathway name" value="FRS-mediated FGFR2 signaling"/>
</dbReference>
<dbReference type="Reactome" id="R-MMU-5654704">
    <property type="pathway name" value="SHC-mediated cascade:FGFR3"/>
</dbReference>
<dbReference type="Reactome" id="R-MMU-5654706">
    <property type="pathway name" value="FRS-mediated FGFR3 signaling"/>
</dbReference>
<dbReference type="Reactome" id="R-MMU-5654710">
    <property type="pathway name" value="PI-3K cascade:FGFR3"/>
</dbReference>
<dbReference type="Reactome" id="R-MMU-5654712">
    <property type="pathway name" value="FRS-mediated FGFR4 signaling"/>
</dbReference>
<dbReference type="Reactome" id="R-MMU-5654719">
    <property type="pathway name" value="SHC-mediated cascade:FGFR4"/>
</dbReference>
<dbReference type="Reactome" id="R-MMU-5654720">
    <property type="pathway name" value="PI-3K cascade:FGFR4"/>
</dbReference>
<dbReference type="Reactome" id="R-MMU-5654726">
    <property type="pathway name" value="Negative regulation of FGFR1 signaling"/>
</dbReference>
<dbReference type="Reactome" id="R-MMU-5654727">
    <property type="pathway name" value="Negative regulation of FGFR2 signaling"/>
</dbReference>
<dbReference type="Reactome" id="R-MMU-5654732">
    <property type="pathway name" value="Negative regulation of FGFR3 signaling"/>
</dbReference>
<dbReference type="Reactome" id="R-MMU-5654733">
    <property type="pathway name" value="Negative regulation of FGFR4 signaling"/>
</dbReference>
<dbReference type="Reactome" id="R-MMU-5673001">
    <property type="pathway name" value="RAF/MAP kinase cascade"/>
</dbReference>
<dbReference type="Reactome" id="R-MMU-6811558">
    <property type="pathway name" value="PI5P, PP2A and IER3 Regulate PI3K/AKT Signaling"/>
</dbReference>
<dbReference type="BioGRID-ORCS" id="14180">
    <property type="hits" value="2 hits in 76 CRISPR screens"/>
</dbReference>
<dbReference type="ChiTaRS" id="Fgf9">
    <property type="organism name" value="mouse"/>
</dbReference>
<dbReference type="PRO" id="PR:P54130"/>
<dbReference type="Proteomes" id="UP000000589">
    <property type="component" value="Chromosome 14"/>
</dbReference>
<dbReference type="RNAct" id="P54130">
    <property type="molecule type" value="protein"/>
</dbReference>
<dbReference type="Bgee" id="ENSMUSG00000021974">
    <property type="expression patterns" value="Expressed in mesenchyme of tongue and 253 other cell types or tissues"/>
</dbReference>
<dbReference type="ExpressionAtlas" id="P54130">
    <property type="expression patterns" value="baseline and differential"/>
</dbReference>
<dbReference type="GO" id="GO:0005576">
    <property type="term" value="C:extracellular region"/>
    <property type="evidence" value="ECO:0000304"/>
    <property type="project" value="Reactome"/>
</dbReference>
<dbReference type="GO" id="GO:0005615">
    <property type="term" value="C:extracellular space"/>
    <property type="evidence" value="ECO:0000266"/>
    <property type="project" value="MGI"/>
</dbReference>
<dbReference type="GO" id="GO:0008083">
    <property type="term" value="F:growth factor activity"/>
    <property type="evidence" value="ECO:0007669"/>
    <property type="project" value="UniProtKB-KW"/>
</dbReference>
<dbReference type="GO" id="GO:0008201">
    <property type="term" value="F:heparin binding"/>
    <property type="evidence" value="ECO:0007669"/>
    <property type="project" value="UniProtKB-KW"/>
</dbReference>
<dbReference type="GO" id="GO:0032924">
    <property type="term" value="P:activin receptor signaling pathway"/>
    <property type="evidence" value="ECO:0000314"/>
    <property type="project" value="MGI"/>
</dbReference>
<dbReference type="GO" id="GO:0001525">
    <property type="term" value="P:angiogenesis"/>
    <property type="evidence" value="ECO:0000314"/>
    <property type="project" value="MGI"/>
</dbReference>
<dbReference type="GO" id="GO:0060070">
    <property type="term" value="P:canonical Wnt signaling pathway"/>
    <property type="evidence" value="ECO:0000315"/>
    <property type="project" value="MGI"/>
</dbReference>
<dbReference type="GO" id="GO:0003214">
    <property type="term" value="P:cardiac left ventricle morphogenesis"/>
    <property type="evidence" value="ECO:0000304"/>
    <property type="project" value="DFLAT"/>
</dbReference>
<dbReference type="GO" id="GO:0060038">
    <property type="term" value="P:cardiac muscle cell proliferation"/>
    <property type="evidence" value="ECO:0000315"/>
    <property type="project" value="MGI"/>
</dbReference>
<dbReference type="GO" id="GO:0003231">
    <property type="term" value="P:cardiac ventricle development"/>
    <property type="evidence" value="ECO:0000304"/>
    <property type="project" value="DFLAT"/>
</dbReference>
<dbReference type="GO" id="GO:0008283">
    <property type="term" value="P:cell population proliferation"/>
    <property type="evidence" value="ECO:0000315"/>
    <property type="project" value="MGI"/>
</dbReference>
<dbReference type="GO" id="GO:0007267">
    <property type="term" value="P:cell-cell signaling"/>
    <property type="evidence" value="ECO:0000315"/>
    <property type="project" value="MGI"/>
</dbReference>
<dbReference type="GO" id="GO:0002062">
    <property type="term" value="P:chondrocyte differentiation"/>
    <property type="evidence" value="ECO:0000315"/>
    <property type="project" value="MGI"/>
</dbReference>
<dbReference type="GO" id="GO:0048566">
    <property type="term" value="P:embryonic digestive tract development"/>
    <property type="evidence" value="ECO:0000315"/>
    <property type="project" value="MGI"/>
</dbReference>
<dbReference type="GO" id="GO:0030326">
    <property type="term" value="P:embryonic limb morphogenesis"/>
    <property type="evidence" value="ECO:0000315"/>
    <property type="project" value="MGI"/>
</dbReference>
<dbReference type="GO" id="GO:0048706">
    <property type="term" value="P:embryonic skeletal system development"/>
    <property type="evidence" value="ECO:0000315"/>
    <property type="project" value="MGI"/>
</dbReference>
<dbReference type="GO" id="GO:0050673">
    <property type="term" value="P:epithelial cell proliferation"/>
    <property type="evidence" value="ECO:0000314"/>
    <property type="project" value="MGI"/>
</dbReference>
<dbReference type="GO" id="GO:0001654">
    <property type="term" value="P:eye development"/>
    <property type="evidence" value="ECO:0000315"/>
    <property type="project" value="CACAO"/>
</dbReference>
<dbReference type="GO" id="GO:0008543">
    <property type="term" value="P:fibroblast growth factor receptor signaling pathway"/>
    <property type="evidence" value="ECO:0000315"/>
    <property type="project" value="MGI"/>
</dbReference>
<dbReference type="GO" id="GO:0042472">
    <property type="term" value="P:inner ear morphogenesis"/>
    <property type="evidence" value="ECO:0000315"/>
    <property type="project" value="MGI"/>
</dbReference>
<dbReference type="GO" id="GO:0030324">
    <property type="term" value="P:lung development"/>
    <property type="evidence" value="ECO:0000314"/>
    <property type="project" value="MGI"/>
</dbReference>
<dbReference type="GO" id="GO:0060484">
    <property type="term" value="P:lung-associated mesenchyme development"/>
    <property type="evidence" value="ECO:0000315"/>
    <property type="project" value="MGI"/>
</dbReference>
<dbReference type="GO" id="GO:0008584">
    <property type="term" value="P:male gonad development"/>
    <property type="evidence" value="ECO:0000315"/>
    <property type="project" value="MGI"/>
</dbReference>
<dbReference type="GO" id="GO:0030238">
    <property type="term" value="P:male sex determination"/>
    <property type="evidence" value="ECO:0000315"/>
    <property type="project" value="MGI"/>
</dbReference>
<dbReference type="GO" id="GO:0010463">
    <property type="term" value="P:mesenchymal cell proliferation"/>
    <property type="evidence" value="ECO:0000314"/>
    <property type="project" value="MGI"/>
</dbReference>
<dbReference type="GO" id="GO:0000122">
    <property type="term" value="P:negative regulation of transcription by RNA polymerase II"/>
    <property type="evidence" value="ECO:0000315"/>
    <property type="project" value="MGI"/>
</dbReference>
<dbReference type="GO" id="GO:0030178">
    <property type="term" value="P:negative regulation of Wnt signaling pathway"/>
    <property type="evidence" value="ECO:0000316"/>
    <property type="project" value="MGI"/>
</dbReference>
<dbReference type="GO" id="GO:0001649">
    <property type="term" value="P:osteoblast differentiation"/>
    <property type="evidence" value="ECO:0000315"/>
    <property type="project" value="MGI"/>
</dbReference>
<dbReference type="GO" id="GO:0032927">
    <property type="term" value="P:positive regulation of activin receptor signaling pathway"/>
    <property type="evidence" value="ECO:0000314"/>
    <property type="project" value="MGI"/>
</dbReference>
<dbReference type="GO" id="GO:0090263">
    <property type="term" value="P:positive regulation of canonical Wnt signaling pathway"/>
    <property type="evidence" value="ECO:0000315"/>
    <property type="project" value="MGI"/>
</dbReference>
<dbReference type="GO" id="GO:0060045">
    <property type="term" value="P:positive regulation of cardiac muscle cell proliferation"/>
    <property type="evidence" value="ECO:0000315"/>
    <property type="project" value="MGI"/>
</dbReference>
<dbReference type="GO" id="GO:0051781">
    <property type="term" value="P:positive regulation of cell division"/>
    <property type="evidence" value="ECO:0007669"/>
    <property type="project" value="UniProtKB-KW"/>
</dbReference>
<dbReference type="GO" id="GO:0008284">
    <property type="term" value="P:positive regulation of cell population proliferation"/>
    <property type="evidence" value="ECO:0000314"/>
    <property type="project" value="MGI"/>
</dbReference>
<dbReference type="GO" id="GO:0045893">
    <property type="term" value="P:positive regulation of DNA-templated transcription"/>
    <property type="evidence" value="ECO:0000304"/>
    <property type="project" value="DFLAT"/>
</dbReference>
<dbReference type="GO" id="GO:0050679">
    <property type="term" value="P:positive regulation of epithelial cell proliferation"/>
    <property type="evidence" value="ECO:0000314"/>
    <property type="project" value="MGI"/>
</dbReference>
<dbReference type="GO" id="GO:0010628">
    <property type="term" value="P:positive regulation of gene expression"/>
    <property type="evidence" value="ECO:0000314"/>
    <property type="project" value="MGI"/>
</dbReference>
<dbReference type="GO" id="GO:0043410">
    <property type="term" value="P:positive regulation of MAPK cascade"/>
    <property type="evidence" value="ECO:0000266"/>
    <property type="project" value="MGI"/>
</dbReference>
<dbReference type="GO" id="GO:0002053">
    <property type="term" value="P:positive regulation of mesenchymal cell proliferation"/>
    <property type="evidence" value="ECO:0000314"/>
    <property type="project" value="MGI"/>
</dbReference>
<dbReference type="GO" id="GO:0045880">
    <property type="term" value="P:positive regulation of smoothened signaling pathway"/>
    <property type="evidence" value="ECO:0000314"/>
    <property type="project" value="MGI"/>
</dbReference>
<dbReference type="GO" id="GO:2000648">
    <property type="term" value="P:positive regulation of stem cell proliferation"/>
    <property type="evidence" value="ECO:0000314"/>
    <property type="project" value="MGI"/>
</dbReference>
<dbReference type="GO" id="GO:1904707">
    <property type="term" value="P:positive regulation of vascular associated smooth muscle cell proliferation"/>
    <property type="evidence" value="ECO:0007669"/>
    <property type="project" value="Ensembl"/>
</dbReference>
<dbReference type="GO" id="GO:0030949">
    <property type="term" value="P:positive regulation of vascular endothelial growth factor receptor signaling pathway"/>
    <property type="evidence" value="ECO:0000315"/>
    <property type="project" value="MGI"/>
</dbReference>
<dbReference type="GO" id="GO:0006606">
    <property type="term" value="P:protein import into nucleus"/>
    <property type="evidence" value="ECO:0000315"/>
    <property type="project" value="MGI"/>
</dbReference>
<dbReference type="GO" id="GO:0048505">
    <property type="term" value="P:regulation of timing of cell differentiation"/>
    <property type="evidence" value="ECO:0000315"/>
    <property type="project" value="MGI"/>
</dbReference>
<dbReference type="GO" id="GO:0060011">
    <property type="term" value="P:Sertoli cell proliferation"/>
    <property type="evidence" value="ECO:0000315"/>
    <property type="project" value="MGI"/>
</dbReference>
<dbReference type="GO" id="GO:0007224">
    <property type="term" value="P:smoothened signaling pathway"/>
    <property type="evidence" value="ECO:0000314"/>
    <property type="project" value="MGI"/>
</dbReference>
<dbReference type="GO" id="GO:0072089">
    <property type="term" value="P:stem cell proliferation"/>
    <property type="evidence" value="ECO:0000314"/>
    <property type="project" value="MGI"/>
</dbReference>
<dbReference type="GO" id="GO:0048010">
    <property type="term" value="P:vascular endothelial growth factor receptor signaling pathway"/>
    <property type="evidence" value="ECO:0000315"/>
    <property type="project" value="MGI"/>
</dbReference>
<dbReference type="GO" id="GO:0060979">
    <property type="term" value="P:vasculogenesis involved in coronary vascular morphogenesis"/>
    <property type="evidence" value="ECO:0000304"/>
    <property type="project" value="DFLAT"/>
</dbReference>
<dbReference type="GO" id="GO:0016055">
    <property type="term" value="P:Wnt signaling pathway"/>
    <property type="evidence" value="ECO:0000316"/>
    <property type="project" value="MGI"/>
</dbReference>
<dbReference type="CDD" id="cd23325">
    <property type="entry name" value="beta-trefoil_FGF9"/>
    <property type="match status" value="1"/>
</dbReference>
<dbReference type="FunFam" id="2.80.10.50:FF:000004">
    <property type="entry name" value="Fibroblast growth factor"/>
    <property type="match status" value="1"/>
</dbReference>
<dbReference type="Gene3D" id="2.80.10.50">
    <property type="match status" value="1"/>
</dbReference>
<dbReference type="InterPro" id="IPR002209">
    <property type="entry name" value="Fibroblast_GF_fam"/>
</dbReference>
<dbReference type="InterPro" id="IPR008996">
    <property type="entry name" value="IL1/FGF"/>
</dbReference>
<dbReference type="PANTHER" id="PTHR11486">
    <property type="entry name" value="FIBROBLAST GROWTH FACTOR"/>
    <property type="match status" value="1"/>
</dbReference>
<dbReference type="Pfam" id="PF00167">
    <property type="entry name" value="FGF"/>
    <property type="match status" value="1"/>
</dbReference>
<dbReference type="PRINTS" id="PR00263">
    <property type="entry name" value="HBGFFGF"/>
</dbReference>
<dbReference type="PRINTS" id="PR00262">
    <property type="entry name" value="IL1HBGF"/>
</dbReference>
<dbReference type="SMART" id="SM00442">
    <property type="entry name" value="FGF"/>
    <property type="match status" value="1"/>
</dbReference>
<dbReference type="SUPFAM" id="SSF50353">
    <property type="entry name" value="Cytokine"/>
    <property type="match status" value="1"/>
</dbReference>
<dbReference type="PROSITE" id="PS00247">
    <property type="entry name" value="HBGF_FGF"/>
    <property type="match status" value="1"/>
</dbReference>
<sequence length="208" mass="23414">MAPLGEVGSYFGVQDAVPFGNVPVLPVDSPVLLSDHLGQSEAGGLPRGPAVTDLDHLKGILRRRQLYCRTGFHLEIFPNGTIQGTRKDHSRFGILEFISIAVGLVSIRGVDSGLYLGMNEKGELYGSEKLTQECVFREQFEENWYNTYSSNLYKHVDTGRRYYVALNKDGTPREGTRTKRHQKFTHFLPRPVDPDKVPELYKDILSQS</sequence>
<name>FGF9_MOUSE</name>
<feature type="propeptide" id="PRO_0000008975" evidence="1">
    <location>
        <begin position="1"/>
        <end position="3"/>
    </location>
</feature>
<feature type="chain" id="PRO_0000008976" description="Fibroblast growth factor 9">
    <location>
        <begin position="4"/>
        <end position="208"/>
    </location>
</feature>
<feature type="glycosylation site" description="N-linked (GlcNAc...) asparagine" evidence="2">
    <location>
        <position position="79"/>
    </location>
</feature>
<feature type="sequence conflict" description="In Ref. 1; AAC52529 and 4; AAD49222." evidence="3" ref="1 4">
    <original>S</original>
    <variation>N</variation>
    <location>
        <position position="34"/>
    </location>
</feature>
<evidence type="ECO:0000250" key="1"/>
<evidence type="ECO:0000255" key="2"/>
<evidence type="ECO:0000305" key="3"/>
<comment type="function">
    <text>Plays an important role in the regulation of embryonic development, cell proliferation, cell differentiation and cell migration. May have a role in glial cell growth and differentiation during development, gliosis during repair and regeneration of brain tissue after damage, differentiation and survival of neuronal cells, and growth stimulation of glial tumors.</text>
</comment>
<comment type="subunit">
    <text evidence="1">Monomer. Homodimer. Interacts with FGFR1, FGFR2, FGFR3 and FGFR4. Affinity between fibroblast growth factors (FGFs) and their receptors is increased by heparan sulfate glycosaminoglycans that function as coreceptors (By similarity).</text>
</comment>
<comment type="subcellular location">
    <subcellularLocation>
        <location>Secreted</location>
    </subcellularLocation>
</comment>
<comment type="similarity">
    <text evidence="3">Belongs to the heparin-binding growth factors family.</text>
</comment>
<gene>
    <name type="primary">Fgf9</name>
    <name type="synonym">Fgf-9</name>
</gene>
<keyword id="KW-0217">Developmental protein</keyword>
<keyword id="KW-0221">Differentiation</keyword>
<keyword id="KW-0325">Glycoprotein</keyword>
<keyword id="KW-0339">Growth factor</keyword>
<keyword id="KW-0358">Heparin-binding</keyword>
<keyword id="KW-0497">Mitogen</keyword>
<keyword id="KW-1185">Reference proteome</keyword>
<keyword id="KW-0964">Secreted</keyword>
<reference key="1">
    <citation type="journal article" date="1996" name="J. Biol. Chem.">
        <title>Expression and biological activity of mouse fibroblast growth factor-9.</title>
        <authorList>
            <person name="Santos-Ocampo S."/>
            <person name="Colvin J.S."/>
            <person name="Chellaiah A.T."/>
            <person name="Ornitz D.M."/>
        </authorList>
    </citation>
    <scope>NUCLEOTIDE SEQUENCE [MRNA]</scope>
    <source>
        <strain>FVB/NJ</strain>
    </source>
</reference>
<reference key="2">
    <citation type="journal article" date="1995" name="FEBS Lett.">
        <title>Retinoic acid induces gene expression of fibroblast growth factor-9 during induction of neuronal differentiation of mouse embryonal carcinoma P19 cells.</title>
        <authorList>
            <person name="Seo M."/>
            <person name="Noguchi K."/>
        </authorList>
    </citation>
    <scope>NUCLEOTIDE SEQUENCE [MRNA]</scope>
</reference>
<reference key="3">
    <citation type="journal article" date="1995" name="Growth Factors">
        <title>Identification of fibroblast growth factor 9 (FGF9) as a high affinity, heparin dependent ligand for FGF receptors 3 and 2 but not for FGF receptors 1 and 4.</title>
        <authorList>
            <person name="Hecht D."/>
            <person name="Zimmerman N."/>
            <person name="Bedford M."/>
            <person name="Avivi A."/>
            <person name="Yayon A."/>
        </authorList>
    </citation>
    <scope>NUCLEOTIDE SEQUENCE [MRNA]</scope>
</reference>
<reference key="4">
    <citation type="journal article" date="1999" name="Dev. Dyn.">
        <title>Genomic organization and embryonic expression of the mouse fibroblast growth factor 9 gene.</title>
        <authorList>
            <person name="Colvin J.S."/>
            <person name="Feldman B."/>
            <person name="Nadeau J.H."/>
            <person name="Goldfarb M."/>
            <person name="Ornitz D.M."/>
        </authorList>
    </citation>
    <scope>NUCLEOTIDE SEQUENCE [GENOMIC DNA]</scope>
    <source>
        <strain>129/SvJ</strain>
    </source>
</reference>
<reference key="5">
    <citation type="journal article" date="2005" name="Science">
        <title>The transcriptional landscape of the mammalian genome.</title>
        <authorList>
            <person name="Carninci P."/>
            <person name="Kasukawa T."/>
            <person name="Katayama S."/>
            <person name="Gough J."/>
            <person name="Frith M.C."/>
            <person name="Maeda N."/>
            <person name="Oyama R."/>
            <person name="Ravasi T."/>
            <person name="Lenhard B."/>
            <person name="Wells C."/>
            <person name="Kodzius R."/>
            <person name="Shimokawa K."/>
            <person name="Bajic V.B."/>
            <person name="Brenner S.E."/>
            <person name="Batalov S."/>
            <person name="Forrest A.R."/>
            <person name="Zavolan M."/>
            <person name="Davis M.J."/>
            <person name="Wilming L.G."/>
            <person name="Aidinis V."/>
            <person name="Allen J.E."/>
            <person name="Ambesi-Impiombato A."/>
            <person name="Apweiler R."/>
            <person name="Aturaliya R.N."/>
            <person name="Bailey T.L."/>
            <person name="Bansal M."/>
            <person name="Baxter L."/>
            <person name="Beisel K.W."/>
            <person name="Bersano T."/>
            <person name="Bono H."/>
            <person name="Chalk A.M."/>
            <person name="Chiu K.P."/>
            <person name="Choudhary V."/>
            <person name="Christoffels A."/>
            <person name="Clutterbuck D.R."/>
            <person name="Crowe M.L."/>
            <person name="Dalla E."/>
            <person name="Dalrymple B.P."/>
            <person name="de Bono B."/>
            <person name="Della Gatta G."/>
            <person name="di Bernardo D."/>
            <person name="Down T."/>
            <person name="Engstrom P."/>
            <person name="Fagiolini M."/>
            <person name="Faulkner G."/>
            <person name="Fletcher C.F."/>
            <person name="Fukushima T."/>
            <person name="Furuno M."/>
            <person name="Futaki S."/>
            <person name="Gariboldi M."/>
            <person name="Georgii-Hemming P."/>
            <person name="Gingeras T.R."/>
            <person name="Gojobori T."/>
            <person name="Green R.E."/>
            <person name="Gustincich S."/>
            <person name="Harbers M."/>
            <person name="Hayashi Y."/>
            <person name="Hensch T.K."/>
            <person name="Hirokawa N."/>
            <person name="Hill D."/>
            <person name="Huminiecki L."/>
            <person name="Iacono M."/>
            <person name="Ikeo K."/>
            <person name="Iwama A."/>
            <person name="Ishikawa T."/>
            <person name="Jakt M."/>
            <person name="Kanapin A."/>
            <person name="Katoh M."/>
            <person name="Kawasawa Y."/>
            <person name="Kelso J."/>
            <person name="Kitamura H."/>
            <person name="Kitano H."/>
            <person name="Kollias G."/>
            <person name="Krishnan S.P."/>
            <person name="Kruger A."/>
            <person name="Kummerfeld S.K."/>
            <person name="Kurochkin I.V."/>
            <person name="Lareau L.F."/>
            <person name="Lazarevic D."/>
            <person name="Lipovich L."/>
            <person name="Liu J."/>
            <person name="Liuni S."/>
            <person name="McWilliam S."/>
            <person name="Madan Babu M."/>
            <person name="Madera M."/>
            <person name="Marchionni L."/>
            <person name="Matsuda H."/>
            <person name="Matsuzawa S."/>
            <person name="Miki H."/>
            <person name="Mignone F."/>
            <person name="Miyake S."/>
            <person name="Morris K."/>
            <person name="Mottagui-Tabar S."/>
            <person name="Mulder N."/>
            <person name="Nakano N."/>
            <person name="Nakauchi H."/>
            <person name="Ng P."/>
            <person name="Nilsson R."/>
            <person name="Nishiguchi S."/>
            <person name="Nishikawa S."/>
            <person name="Nori F."/>
            <person name="Ohara O."/>
            <person name="Okazaki Y."/>
            <person name="Orlando V."/>
            <person name="Pang K.C."/>
            <person name="Pavan W.J."/>
            <person name="Pavesi G."/>
            <person name="Pesole G."/>
            <person name="Petrovsky N."/>
            <person name="Piazza S."/>
            <person name="Reed J."/>
            <person name="Reid J.F."/>
            <person name="Ring B.Z."/>
            <person name="Ringwald M."/>
            <person name="Rost B."/>
            <person name="Ruan Y."/>
            <person name="Salzberg S.L."/>
            <person name="Sandelin A."/>
            <person name="Schneider C."/>
            <person name="Schoenbach C."/>
            <person name="Sekiguchi K."/>
            <person name="Semple C.A."/>
            <person name="Seno S."/>
            <person name="Sessa L."/>
            <person name="Sheng Y."/>
            <person name="Shibata Y."/>
            <person name="Shimada H."/>
            <person name="Shimada K."/>
            <person name="Silva D."/>
            <person name="Sinclair B."/>
            <person name="Sperling S."/>
            <person name="Stupka E."/>
            <person name="Sugiura K."/>
            <person name="Sultana R."/>
            <person name="Takenaka Y."/>
            <person name="Taki K."/>
            <person name="Tammoja K."/>
            <person name="Tan S.L."/>
            <person name="Tang S."/>
            <person name="Taylor M.S."/>
            <person name="Tegner J."/>
            <person name="Teichmann S.A."/>
            <person name="Ueda H.R."/>
            <person name="van Nimwegen E."/>
            <person name="Verardo R."/>
            <person name="Wei C.L."/>
            <person name="Yagi K."/>
            <person name="Yamanishi H."/>
            <person name="Zabarovsky E."/>
            <person name="Zhu S."/>
            <person name="Zimmer A."/>
            <person name="Hide W."/>
            <person name="Bult C."/>
            <person name="Grimmond S.M."/>
            <person name="Teasdale R.D."/>
            <person name="Liu E.T."/>
            <person name="Brusic V."/>
            <person name="Quackenbush J."/>
            <person name="Wahlestedt C."/>
            <person name="Mattick J.S."/>
            <person name="Hume D.A."/>
            <person name="Kai C."/>
            <person name="Sasaki D."/>
            <person name="Tomaru Y."/>
            <person name="Fukuda S."/>
            <person name="Kanamori-Katayama M."/>
            <person name="Suzuki M."/>
            <person name="Aoki J."/>
            <person name="Arakawa T."/>
            <person name="Iida J."/>
            <person name="Imamura K."/>
            <person name="Itoh M."/>
            <person name="Kato T."/>
            <person name="Kawaji H."/>
            <person name="Kawagashira N."/>
            <person name="Kawashima T."/>
            <person name="Kojima M."/>
            <person name="Kondo S."/>
            <person name="Konno H."/>
            <person name="Nakano K."/>
            <person name="Ninomiya N."/>
            <person name="Nishio T."/>
            <person name="Okada M."/>
            <person name="Plessy C."/>
            <person name="Shibata K."/>
            <person name="Shiraki T."/>
            <person name="Suzuki S."/>
            <person name="Tagami M."/>
            <person name="Waki K."/>
            <person name="Watahiki A."/>
            <person name="Okamura-Oho Y."/>
            <person name="Suzuki H."/>
            <person name="Kawai J."/>
            <person name="Hayashizaki Y."/>
        </authorList>
    </citation>
    <scope>NUCLEOTIDE SEQUENCE [LARGE SCALE MRNA]</scope>
    <source>
        <strain>C57BL/6J</strain>
        <tissue>Visual cortex</tissue>
    </source>
</reference>
<reference key="6">
    <citation type="journal article" date="2009" name="PLoS Biol.">
        <title>Lineage-specific biology revealed by a finished genome assembly of the mouse.</title>
        <authorList>
            <person name="Church D.M."/>
            <person name="Goodstadt L."/>
            <person name="Hillier L.W."/>
            <person name="Zody M.C."/>
            <person name="Goldstein S."/>
            <person name="She X."/>
            <person name="Bult C.J."/>
            <person name="Agarwala R."/>
            <person name="Cherry J.L."/>
            <person name="DiCuccio M."/>
            <person name="Hlavina W."/>
            <person name="Kapustin Y."/>
            <person name="Meric P."/>
            <person name="Maglott D."/>
            <person name="Birtle Z."/>
            <person name="Marques A.C."/>
            <person name="Graves T."/>
            <person name="Zhou S."/>
            <person name="Teague B."/>
            <person name="Potamousis K."/>
            <person name="Churas C."/>
            <person name="Place M."/>
            <person name="Herschleb J."/>
            <person name="Runnheim R."/>
            <person name="Forrest D."/>
            <person name="Amos-Landgraf J."/>
            <person name="Schwartz D.C."/>
            <person name="Cheng Z."/>
            <person name="Lindblad-Toh K."/>
            <person name="Eichler E.E."/>
            <person name="Ponting C.P."/>
        </authorList>
    </citation>
    <scope>NUCLEOTIDE SEQUENCE [LARGE SCALE GENOMIC DNA]</scope>
    <source>
        <strain>C57BL/6J</strain>
    </source>
</reference>
<reference key="7">
    <citation type="submission" date="2005-07" db="EMBL/GenBank/DDBJ databases">
        <authorList>
            <person name="Mural R.J."/>
            <person name="Adams M.D."/>
            <person name="Myers E.W."/>
            <person name="Smith H.O."/>
            <person name="Venter J.C."/>
        </authorList>
    </citation>
    <scope>NUCLEOTIDE SEQUENCE [LARGE SCALE GENOMIC DNA]</scope>
</reference>
<reference key="8">
    <citation type="journal article" date="2004" name="Genome Res.">
        <title>The status, quality, and expansion of the NIH full-length cDNA project: the Mammalian Gene Collection (MGC).</title>
        <authorList>
            <consortium name="The MGC Project Team"/>
        </authorList>
    </citation>
    <scope>NUCLEOTIDE SEQUENCE [LARGE SCALE MRNA]</scope>
</reference>
<accession>P54130</accession>
<accession>Q499I9</accession>
<proteinExistence type="evidence at transcript level"/>